<name>AN36B_HUMAN</name>
<evidence type="ECO:0000255" key="1"/>
<evidence type="ECO:0000256" key="2">
    <source>
        <dbReference type="SAM" id="MobiDB-lite"/>
    </source>
</evidence>
<evidence type="ECO:0000303" key="3">
    <source>
    </source>
</evidence>
<evidence type="ECO:0000303" key="4">
    <source>
    </source>
</evidence>
<evidence type="ECO:0000303" key="5">
    <source ref="4"/>
</evidence>
<evidence type="ECO:0000305" key="6"/>
<keyword id="KW-0025">Alternative splicing</keyword>
<keyword id="KW-0040">ANK repeat</keyword>
<keyword id="KW-0175">Coiled coil</keyword>
<keyword id="KW-1185">Reference proteome</keyword>
<keyword id="KW-0677">Repeat</keyword>
<accession>Q8N2N9</accession>
<accession>Q08AK5</accession>
<accession>Q6IPR0</accession>
<accession>Q6PI49</accession>
<accession>Q8IZM7</accession>
<accession>Q8TDH6</accession>
<accession>Q96N30</accession>
<accession>Q9H759</accession>
<dbReference type="EMBL" id="AC017099">
    <property type="status" value="NOT_ANNOTATED_CDS"/>
    <property type="molecule type" value="Genomic_DNA"/>
</dbReference>
<dbReference type="EMBL" id="BC031883">
    <property type="protein sequence ID" value="AAH31883.1"/>
    <property type="molecule type" value="mRNA"/>
</dbReference>
<dbReference type="EMBL" id="BC044844">
    <property type="protein sequence ID" value="AAH44844.1"/>
    <property type="molecule type" value="mRNA"/>
</dbReference>
<dbReference type="EMBL" id="BC071771">
    <property type="status" value="NOT_ANNOTATED_CDS"/>
    <property type="molecule type" value="mRNA"/>
</dbReference>
<dbReference type="EMBL" id="BC125132">
    <property type="protein sequence ID" value="AAI25133.1"/>
    <property type="status" value="ALT_INIT"/>
    <property type="molecule type" value="mRNA"/>
</dbReference>
<dbReference type="EMBL" id="BC125133">
    <property type="protein sequence ID" value="AAI25134.1"/>
    <property type="status" value="ALT_INIT"/>
    <property type="molecule type" value="mRNA"/>
</dbReference>
<dbReference type="EMBL" id="AK024934">
    <property type="protein sequence ID" value="BAB15039.1"/>
    <property type="status" value="ALT_INIT"/>
    <property type="molecule type" value="mRNA"/>
</dbReference>
<dbReference type="EMBL" id="AK056042">
    <property type="protein sequence ID" value="BAB71081.1"/>
    <property type="status" value="ALT_INIT"/>
    <property type="molecule type" value="mRNA"/>
</dbReference>
<dbReference type="EMBL" id="AK074570">
    <property type="protein sequence ID" value="BAC11066.1"/>
    <property type="molecule type" value="mRNA"/>
</dbReference>
<dbReference type="EMBL" id="AF432208">
    <property type="protein sequence ID" value="AAL99915.1"/>
    <property type="status" value="ALT_INIT"/>
    <property type="molecule type" value="mRNA"/>
</dbReference>
<dbReference type="CCDS" id="CCDS74543.1">
    <molecule id="Q8N2N9-1"/>
</dbReference>
<dbReference type="RefSeq" id="NP_001380868.1">
    <molecule id="Q8N2N9-1"/>
    <property type="nucleotide sequence ID" value="NM_001393939.1"/>
</dbReference>
<dbReference type="RefSeq" id="NP_079466.3">
    <molecule id="Q8N2N9-1"/>
    <property type="nucleotide sequence ID" value="NM_025190.3"/>
</dbReference>
<dbReference type="RefSeq" id="XP_005264052.1">
    <molecule id="Q8N2N9-1"/>
    <property type="nucleotide sequence ID" value="XM_005263995.6"/>
</dbReference>
<dbReference type="RefSeq" id="XP_006712724.1">
    <property type="nucleotide sequence ID" value="XM_006712661.1"/>
</dbReference>
<dbReference type="RefSeq" id="XP_054188941.1">
    <molecule id="Q8N2N9-1"/>
    <property type="nucleotide sequence ID" value="XM_054332966.1"/>
</dbReference>
<dbReference type="RefSeq" id="XP_054199200.1">
    <molecule id="Q8N2N9-1"/>
    <property type="nucleotide sequence ID" value="XM_054343225.1"/>
</dbReference>
<dbReference type="RefSeq" id="XP_054199202.1">
    <molecule id="Q8N2N9-3"/>
    <property type="nucleotide sequence ID" value="XM_054343227.1"/>
</dbReference>
<dbReference type="SMR" id="Q8N2N9"/>
<dbReference type="BioGRID" id="121750">
    <property type="interactions" value="64"/>
</dbReference>
<dbReference type="FunCoup" id="Q8N2N9">
    <property type="interactions" value="139"/>
</dbReference>
<dbReference type="IntAct" id="Q8N2N9">
    <property type="interactions" value="64"/>
</dbReference>
<dbReference type="STRING" id="9606.ENSP00000481149"/>
<dbReference type="GlyGen" id="Q8N2N9">
    <property type="glycosylation" value="2 sites, 1 O-linked glycan (2 sites)"/>
</dbReference>
<dbReference type="iPTMnet" id="Q8N2N9"/>
<dbReference type="PhosphoSitePlus" id="Q8N2N9"/>
<dbReference type="BioMuta" id="ANKRD36B"/>
<dbReference type="DMDM" id="302393831"/>
<dbReference type="jPOST" id="Q8N2N9"/>
<dbReference type="MassIVE" id="Q8N2N9"/>
<dbReference type="PaxDb" id="9606-ENSP00000481149"/>
<dbReference type="PeptideAtlas" id="Q8N2N9"/>
<dbReference type="ProteomicsDB" id="71719">
    <molecule id="Q8N2N9-1"/>
</dbReference>
<dbReference type="ProteomicsDB" id="71720">
    <molecule id="Q8N2N9-2"/>
</dbReference>
<dbReference type="ProteomicsDB" id="71721">
    <molecule id="Q8N2N9-3"/>
</dbReference>
<dbReference type="Antibodypedia" id="73249">
    <property type="antibodies" value="44 antibodies from 10 providers"/>
</dbReference>
<dbReference type="DNASU" id="57730"/>
<dbReference type="Ensembl" id="ENST00000258459.12">
    <molecule id="Q8N2N9-1"/>
    <property type="protein sequence ID" value="ENSP00000481149.1"/>
    <property type="gene ID" value="ENSG00000196912.13"/>
</dbReference>
<dbReference type="Ensembl" id="ENST00000359901.9">
    <molecule id="Q8N2N9-1"/>
    <property type="protein sequence ID" value="ENSP00000477778.1"/>
    <property type="gene ID" value="ENSG00000196912.13"/>
</dbReference>
<dbReference type="Ensembl" id="ENST00000443455.5">
    <molecule id="Q8N2N9-4"/>
    <property type="protein sequence ID" value="ENSP00000482644.1"/>
    <property type="gene ID" value="ENSG00000196912.13"/>
</dbReference>
<dbReference type="Ensembl" id="ENST00000708143.1">
    <molecule id="Q8N2N9-1"/>
    <property type="protein sequence ID" value="ENSP00000517103.1"/>
    <property type="gene ID" value="ENSG00000291600.1"/>
</dbReference>
<dbReference type="Ensembl" id="ENST00000708145.1">
    <molecule id="Q8N2N9-1"/>
    <property type="protein sequence ID" value="ENSP00000517104.1"/>
    <property type="gene ID" value="ENSG00000291600.1"/>
</dbReference>
<dbReference type="Ensembl" id="ENST00000708148.1">
    <molecule id="Q8N2N9-4"/>
    <property type="protein sequence ID" value="ENSP00000517106.1"/>
    <property type="gene ID" value="ENSG00000291600.1"/>
</dbReference>
<dbReference type="GeneID" id="57730"/>
<dbReference type="KEGG" id="hsa:57730"/>
<dbReference type="MANE-Select" id="ENST00000359901.9">
    <property type="protein sequence ID" value="ENSP00000477778.1"/>
    <property type="RefSeq nucleotide sequence ID" value="NM_001393939.1"/>
    <property type="RefSeq protein sequence ID" value="NP_001380868.1"/>
</dbReference>
<dbReference type="UCSC" id="uc010fid.2">
    <molecule id="Q8N2N9-1"/>
    <property type="organism name" value="human"/>
</dbReference>
<dbReference type="AGR" id="HGNC:29333"/>
<dbReference type="CTD" id="57730"/>
<dbReference type="DisGeNET" id="57730"/>
<dbReference type="GeneCards" id="ANKRD36B"/>
<dbReference type="HGNC" id="HGNC:29333">
    <property type="gene designation" value="ANKRD36B"/>
</dbReference>
<dbReference type="HPA" id="ENSG00000196912">
    <property type="expression patterns" value="Low tissue specificity"/>
</dbReference>
<dbReference type="neXtProt" id="NX_Q8N2N9"/>
<dbReference type="OpenTargets" id="ENSG00000196912"/>
<dbReference type="VEuPathDB" id="HostDB:ENSG00000196912"/>
<dbReference type="eggNOG" id="KOG0504">
    <property type="taxonomic scope" value="Eukaryota"/>
</dbReference>
<dbReference type="GeneTree" id="ENSGT00940000163264"/>
<dbReference type="HOGENOM" id="CLU_001111_2_2_1"/>
<dbReference type="InParanoid" id="Q8N2N9"/>
<dbReference type="PAN-GO" id="Q8N2N9">
    <property type="GO annotations" value="0 GO annotations based on evolutionary models"/>
</dbReference>
<dbReference type="PathwayCommons" id="Q8N2N9"/>
<dbReference type="SignaLink" id="Q8N2N9"/>
<dbReference type="BioGRID-ORCS" id="57730">
    <property type="hits" value="1 hit in 169 CRISPR screens"/>
</dbReference>
<dbReference type="ChiTaRS" id="ANKRD36B">
    <property type="organism name" value="human"/>
</dbReference>
<dbReference type="GenomeRNAi" id="57730"/>
<dbReference type="Pharos" id="Q8N2N9">
    <property type="development level" value="Tdark"/>
</dbReference>
<dbReference type="PRO" id="PR:Q8N2N9"/>
<dbReference type="Proteomes" id="UP000005640">
    <property type="component" value="Chromosome 2"/>
</dbReference>
<dbReference type="RNAct" id="Q8N2N9">
    <property type="molecule type" value="protein"/>
</dbReference>
<dbReference type="Bgee" id="ENSG00000196912">
    <property type="expression patterns" value="Expressed in sural nerve and 99 other cell types or tissues"/>
</dbReference>
<dbReference type="ExpressionAtlas" id="Q8N2N9">
    <property type="expression patterns" value="baseline and differential"/>
</dbReference>
<dbReference type="GO" id="GO:0042802">
    <property type="term" value="F:identical protein binding"/>
    <property type="evidence" value="ECO:0000353"/>
    <property type="project" value="IntAct"/>
</dbReference>
<dbReference type="Gene3D" id="1.25.40.20">
    <property type="entry name" value="Ankyrin repeat-containing domain"/>
    <property type="match status" value="1"/>
</dbReference>
<dbReference type="InterPro" id="IPR050657">
    <property type="entry name" value="Ankyrin_repeat_domain"/>
</dbReference>
<dbReference type="InterPro" id="IPR002110">
    <property type="entry name" value="Ankyrin_rpt"/>
</dbReference>
<dbReference type="InterPro" id="IPR036770">
    <property type="entry name" value="Ankyrin_rpt-contain_sf"/>
</dbReference>
<dbReference type="InterPro" id="IPR039497">
    <property type="entry name" value="CC144C-like_CC_dom"/>
</dbReference>
<dbReference type="PANTHER" id="PTHR24147">
    <property type="entry name" value="ANKYRIN REPEAT DOMAIN 36-RELATED"/>
    <property type="match status" value="1"/>
</dbReference>
<dbReference type="PANTHER" id="PTHR24147:SF50">
    <property type="entry name" value="ANKYRIN REPEAT DOMAIN-CONTAINING PROTEIN 36A-RELATED"/>
    <property type="match status" value="1"/>
</dbReference>
<dbReference type="Pfam" id="PF12796">
    <property type="entry name" value="Ank_2"/>
    <property type="match status" value="2"/>
</dbReference>
<dbReference type="Pfam" id="PF14915">
    <property type="entry name" value="CCDC144C"/>
    <property type="match status" value="2"/>
</dbReference>
<dbReference type="SMART" id="SM00248">
    <property type="entry name" value="ANK"/>
    <property type="match status" value="6"/>
</dbReference>
<dbReference type="SUPFAM" id="SSF48403">
    <property type="entry name" value="Ankyrin repeat"/>
    <property type="match status" value="1"/>
</dbReference>
<dbReference type="PROSITE" id="PS50297">
    <property type="entry name" value="ANK_REP_REGION"/>
    <property type="match status" value="1"/>
</dbReference>
<dbReference type="PROSITE" id="PS50088">
    <property type="entry name" value="ANK_REPEAT"/>
    <property type="match status" value="5"/>
</dbReference>
<proteinExistence type="evidence at protein level"/>
<sequence length="1353" mass="153582">MERLCSDGFAFPHYYIKPYHLKRIHRAVLRGNLEKLKYLLLTYYDANKRDRKERTALHLACATGQPEMVHLLVSRRCELNLCDREDRTPLIKAVQLRQEACATLLLQNGADPNITDVFGRTALHYAVYNEDTSMIEKLLSHGTNIEECSKNEYQPLLLAVSRRKVKMVEFLLKKKANVNAIDYLGRSALILAVTLGEKDIVILLLQHNIDVFSRDVYGKLAEDYASEAENRVIFDLIYEYKRKRYEDLPINSNPVSPQKQRAEKATSDDKDSVSNIATEIKEGPISGTVSSQKQPAEKATSDEKDSVSNIATEIKEGQQSGTVSPQKQSAQKVIFKKKVSLLNIATRIMGGGKSGTVSSQKQPASKTASDKTDSALNTATEIKDGLQCGTVSSQKQQALKATTDEEGSVSNIATEIKDGEKSGTVSSQKKPALKATSDEKDSFSNITREKKDGEISRTVSSQKPPALKATSVKEDSVLNIAREKKDGEKSRTVSFEQPPGLKATRDEKDSLLNIARGKKDGEKTRRVSSHKQPSLKATSDKEDSVPNMATETKDEQISGTVSCQKQPALKATSDKKDSVSNIPTEIKDGQQSGTVSSQKQPAWKATSVKKDSVSNIATEIKDGQIRGTVSSQRRPALKTTGDEKDSVSNIAREIKDGEKSGTVSPQKQSAQKVIFKKKVSLLNIATRITGGGKSGTEYPENLRTLKATIENKDSVLNTATKMKEVQTSTPAEQDLEMASEGEQKRLEEYENNQPQVKNQIHSRDDLDDIIQSSQTVSEDGDSLCCNCKNVILLIDQHEMKCKDCVHLLKIKNTFCLWKRLIKLKDNHCEQLRVKIRKLKNKASVLQKRISEKEEIKSQLKHEILELEKELCSLRFAIQQEKKKRRNVEELHQKVREKLRITEEQYRIEADVTKPIKPALKSAEVELKTGGNNSNQVSETDEKEDLLHENRLMQDEIARLRLEKDTIKNQNLEKKYLKDFEIVKRKHEDLQKALKRNGETLAKTIACYSGQLAALTDENTTLRSKLEKQRESRQRLETEMQSYRCRLNAARCDHDQSHSSKRDQELAFQGTVDKCRHLQENLNSHVLILSLQLSKAESKSRVLKTELHYTGEALKEKALVFEHVQSELKQKQSQMKDIEKMYKSGYNTMEKCIEKQERFCQLKKQNMLLQQQLDDARNKADNQEKAILNIQARCDARVQNLQAECRKHRLLLEEDNKMLVNELNHSKEKECQYEKEKAEREVAVRQLQQKRDDVLNKGSATKALLDASSRHCTYLENGMQDSRKKLDQMRSQFQEIQDQLTATIRCTKEMEGDTQKLEVEHVMMRKIIKKQDDQIERLEKILQHSSLMLQVFES</sequence>
<protein>
    <recommendedName>
        <fullName>Ankyrin repeat domain-containing protein 36B</fullName>
    </recommendedName>
    <alternativeName>
        <fullName>CLL-associated antigen KW-1</fullName>
    </alternativeName>
</protein>
<gene>
    <name type="primary">ANKRD36B</name>
</gene>
<feature type="chain" id="PRO_0000243912" description="Ankyrin repeat domain-containing protein 36B">
    <location>
        <begin position="1"/>
        <end position="1353"/>
    </location>
</feature>
<feature type="repeat" description="ANK 1">
    <location>
        <begin position="19"/>
        <end position="48"/>
    </location>
</feature>
<feature type="repeat" description="ANK 2">
    <location>
        <begin position="52"/>
        <end position="81"/>
    </location>
</feature>
<feature type="repeat" description="ANK 3">
    <location>
        <begin position="85"/>
        <end position="114"/>
    </location>
</feature>
<feature type="repeat" description="ANK 4">
    <location>
        <begin position="118"/>
        <end position="147"/>
    </location>
</feature>
<feature type="repeat" description="ANK 5">
    <location>
        <begin position="151"/>
        <end position="180"/>
    </location>
</feature>
<feature type="repeat" description="ANK 6">
    <location>
        <begin position="184"/>
        <end position="213"/>
    </location>
</feature>
<feature type="region of interest" description="Disordered" evidence="2">
    <location>
        <begin position="249"/>
        <end position="307"/>
    </location>
</feature>
<feature type="region of interest" description="Disordered" evidence="2">
    <location>
        <begin position="349"/>
        <end position="607"/>
    </location>
</feature>
<feature type="coiled-coil region" evidence="1">
    <location>
        <begin position="731"/>
        <end position="762"/>
    </location>
</feature>
<feature type="coiled-coil region" evidence="1">
    <location>
        <begin position="821"/>
        <end position="908"/>
    </location>
</feature>
<feature type="coiled-coil region" evidence="1">
    <location>
        <begin position="937"/>
        <end position="1055"/>
    </location>
</feature>
<feature type="coiled-coil region" evidence="1">
    <location>
        <begin position="1119"/>
        <end position="1344"/>
    </location>
</feature>
<feature type="compositionally biased region" description="Polar residues" evidence="2">
    <location>
        <begin position="250"/>
        <end position="259"/>
    </location>
</feature>
<feature type="compositionally biased region" description="Basic and acidic residues" evidence="2">
    <location>
        <begin position="260"/>
        <end position="272"/>
    </location>
</feature>
<feature type="compositionally biased region" description="Basic and acidic residues" evidence="2">
    <location>
        <begin position="295"/>
        <end position="306"/>
    </location>
</feature>
<feature type="compositionally biased region" description="Polar residues" evidence="2">
    <location>
        <begin position="355"/>
        <end position="367"/>
    </location>
</feature>
<feature type="compositionally biased region" description="Polar residues" evidence="2">
    <location>
        <begin position="389"/>
        <end position="400"/>
    </location>
</feature>
<feature type="compositionally biased region" description="Basic and acidic residues" evidence="2">
    <location>
        <begin position="436"/>
        <end position="455"/>
    </location>
</feature>
<feature type="compositionally biased region" description="Basic and acidic residues" evidence="2">
    <location>
        <begin position="471"/>
        <end position="491"/>
    </location>
</feature>
<feature type="compositionally biased region" description="Polar residues" evidence="2">
    <location>
        <begin position="579"/>
        <end position="600"/>
    </location>
</feature>
<feature type="splice variant" id="VSP_039666" description="In isoform 4." evidence="3 4">
    <original>IFDLIYE</original>
    <variation>VSSETTS</variation>
    <location>
        <begin position="233"/>
        <end position="239"/>
    </location>
</feature>
<feature type="splice variant" id="VSP_039667" description="In isoform 4." evidence="3 4">
    <location>
        <begin position="240"/>
        <end position="1353"/>
    </location>
</feature>
<feature type="splice variant" id="VSP_039668" description="In isoform 2." evidence="5">
    <original>FQEIQDQLTATIR</original>
    <variation>VCMQLCTPTTVNL</variation>
    <location>
        <begin position="1292"/>
        <end position="1304"/>
    </location>
</feature>
<feature type="splice variant" id="VSP_039669" description="In isoform 3." evidence="3">
    <original>F</original>
    <variation>A</variation>
    <location>
        <position position="1292"/>
    </location>
</feature>
<feature type="splice variant" id="VSP_039670" description="In isoform 3." evidence="3">
    <location>
        <begin position="1293"/>
        <end position="1353"/>
    </location>
</feature>
<feature type="splice variant" id="VSP_039671" description="In isoform 2." evidence="5">
    <location>
        <begin position="1305"/>
        <end position="1353"/>
    </location>
</feature>
<feature type="sequence variant" id="VAR_060687" description="In dbSNP:rs1839230.">
    <original>E</original>
    <variation>G</variation>
    <location>
        <position position="483"/>
    </location>
</feature>
<feature type="sequence variant" id="VAR_057818" description="In dbSNP:rs13001728.">
    <original>E</original>
    <variation>D</variation>
    <location>
        <position position="496"/>
    </location>
</feature>
<feature type="sequence variant" id="VAR_060688" description="In dbSNP:rs6761299.">
    <original>S</original>
    <variation>A</variation>
    <location>
        <position position="534"/>
    </location>
</feature>
<feature type="sequence conflict" description="In Ref. 3; BAC11066." evidence="6" ref="3">
    <original>R</original>
    <variation>C</variation>
    <location>
        <position position="3"/>
    </location>
</feature>
<feature type="sequence conflict" description="In Ref. 3; BAC11066." evidence="6" ref="3">
    <original>V</original>
    <variation>F</variation>
    <location>
        <position position="117"/>
    </location>
</feature>
<feature type="sequence conflict" description="In Ref. 2; AAH31883/AAH44844." evidence="6" ref="2">
    <original>R</original>
    <variation>K</variation>
    <location>
        <position position="884"/>
    </location>
</feature>
<feature type="sequence conflict" description="In Ref. 3; BAB71081." evidence="6" ref="3">
    <original>N</original>
    <variation>T</variation>
    <location>
        <position position="1223"/>
    </location>
</feature>
<feature type="sequence conflict" description="In Ref. 3; BAB15039." evidence="6" ref="3">
    <original>E</original>
    <variation>D</variation>
    <location>
        <position position="1310"/>
    </location>
</feature>
<comment type="interaction">
    <interactant intactId="EBI-2876112">
        <id>Q8N2N9</id>
    </interactant>
    <interactant intactId="EBI-10175124">
        <id>Q8IZU0</id>
        <label>FAM9B</label>
    </interactant>
    <organismsDiffer>false</organismsDiffer>
    <experiments>3</experiments>
</comment>
<comment type="interaction">
    <interactant intactId="EBI-12170453">
        <id>Q8N2N9-4</id>
    </interactant>
    <interactant intactId="EBI-1042725">
        <id>Q02040</id>
        <label>AKAP17A</label>
    </interactant>
    <organismsDiffer>false</organismsDiffer>
    <experiments>3</experiments>
</comment>
<comment type="interaction">
    <interactant intactId="EBI-12170453">
        <id>Q8N2N9-4</id>
    </interactant>
    <interactant intactId="EBI-12170453">
        <id>Q8N2N9-4</id>
        <label>ANKRD36B</label>
    </interactant>
    <organismsDiffer>false</organismsDiffer>
    <experiments>5</experiments>
</comment>
<comment type="interaction">
    <interactant intactId="EBI-12170453">
        <id>Q8N2N9-4</id>
    </interactant>
    <interactant intactId="EBI-739789">
        <id>Q92997</id>
        <label>DVL3</label>
    </interactant>
    <organismsDiffer>false</organismsDiffer>
    <experiments>3</experiments>
</comment>
<comment type="interaction">
    <interactant intactId="EBI-12170453">
        <id>Q8N2N9-4</id>
    </interactant>
    <interactant intactId="EBI-2339219">
        <id>Q08426</id>
        <label>EHHADH</label>
    </interactant>
    <organismsDiffer>false</organismsDiffer>
    <experiments>3</experiments>
</comment>
<comment type="interaction">
    <interactant intactId="EBI-12170453">
        <id>Q8N2N9-4</id>
    </interactant>
    <interactant intactId="EBI-742102">
        <id>Q8IYI6</id>
        <label>EXOC8</label>
    </interactant>
    <organismsDiffer>false</organismsDiffer>
    <experiments>3</experiments>
</comment>
<comment type="interaction">
    <interactant intactId="EBI-12170453">
        <id>Q8N2N9-4</id>
    </interactant>
    <interactant intactId="EBI-744104">
        <id>P55040</id>
        <label>GEM</label>
    </interactant>
    <organismsDiffer>false</organismsDiffer>
    <experiments>3</experiments>
</comment>
<comment type="interaction">
    <interactant intactId="EBI-12170453">
        <id>Q8N2N9-4</id>
    </interactant>
    <interactant intactId="EBI-7251368">
        <id>Q9BZE0</id>
        <label>GLIS2</label>
    </interactant>
    <organismsDiffer>false</organismsDiffer>
    <experiments>3</experiments>
</comment>
<comment type="interaction">
    <interactant intactId="EBI-12170453">
        <id>Q8N2N9-4</id>
    </interactant>
    <interactant intactId="EBI-10268010">
        <id>Q8N8X9</id>
        <label>MAB21L3</label>
    </interactant>
    <organismsDiffer>false</organismsDiffer>
    <experiments>3</experiments>
</comment>
<comment type="interaction">
    <interactant intactId="EBI-12170453">
        <id>Q8N2N9-4</id>
    </interactant>
    <interactant intactId="EBI-1246238">
        <id>P17568</id>
        <label>NDUFB7</label>
    </interactant>
    <organismsDiffer>false</organismsDiffer>
    <experiments>3</experiments>
</comment>
<comment type="interaction">
    <interactant intactId="EBI-12170453">
        <id>Q8N2N9-4</id>
    </interactant>
    <interactant intactId="EBI-741158">
        <id>Q96HA8</id>
        <label>NTAQ1</label>
    </interactant>
    <organismsDiffer>false</organismsDiffer>
    <experiments>3</experiments>
</comment>
<comment type="interaction">
    <interactant intactId="EBI-12170453">
        <id>Q8N2N9-4</id>
    </interactant>
    <interactant intactId="EBI-727004">
        <id>O00560</id>
        <label>SDCBP</label>
    </interactant>
    <organismsDiffer>false</organismsDiffer>
    <experiments>3</experiments>
</comment>
<comment type="interaction">
    <interactant intactId="EBI-12170453">
        <id>Q8N2N9-4</id>
    </interactant>
    <interactant intactId="EBI-473249">
        <id>O75528</id>
        <label>TADA3</label>
    </interactant>
    <organismsDiffer>false</organismsDiffer>
    <experiments>3</experiments>
</comment>
<comment type="interaction">
    <interactant intactId="EBI-12170453">
        <id>Q8N2N9-4</id>
    </interactant>
    <interactant intactId="EBI-752102">
        <id>Q8WVP5</id>
        <label>TNFAIP8L1</label>
    </interactant>
    <organismsDiffer>false</organismsDiffer>
    <experiments>5</experiments>
</comment>
<comment type="interaction">
    <interactant intactId="EBI-12170453">
        <id>Q8N2N9-4</id>
    </interactant>
    <interactant intactId="EBI-2932492">
        <id>Q99757</id>
        <label>TXN2</label>
    </interactant>
    <organismsDiffer>false</organismsDiffer>
    <experiments>3</experiments>
</comment>
<comment type="interaction">
    <interactant intactId="EBI-12170453">
        <id>Q8N2N9-4</id>
    </interactant>
    <interactant intactId="EBI-18122152">
        <id>Q6F5E7</id>
        <label>TXNRD3NB</label>
    </interactant>
    <organismsDiffer>false</organismsDiffer>
    <experiments>3</experiments>
</comment>
<comment type="interaction">
    <interactant intactId="EBI-12170453">
        <id>Q8N2N9-4</id>
    </interactant>
    <interactant intactId="EBI-597063">
        <id>Q8TBK6</id>
        <label>ZCCHC10</label>
    </interactant>
    <organismsDiffer>false</organismsDiffer>
    <experiments>3</experiments>
</comment>
<comment type="alternative products">
    <event type="alternative splicing"/>
    <isoform>
        <id>Q8N2N9-1</id>
        <name>1</name>
        <sequence type="displayed"/>
    </isoform>
    <isoform>
        <id>Q8N2N9-2</id>
        <name>2</name>
        <sequence type="described" ref="VSP_039668 VSP_039671"/>
    </isoform>
    <isoform>
        <id>Q8N2N9-3</id>
        <name>3</name>
        <sequence type="described" ref="VSP_039669 VSP_039670"/>
    </isoform>
    <isoform>
        <id>Q8N2N9-4</id>
        <name>4</name>
        <sequence type="described" ref="VSP_039666 VSP_039667"/>
    </isoform>
</comment>
<comment type="similarity">
    <text evidence="6">Belongs to the ANKRD36 family.</text>
</comment>
<comment type="sequence caution" evidence="6">
    <conflict type="erroneous initiation">
        <sequence resource="EMBL-CDS" id="AAI25133"/>
    </conflict>
    <text>Truncated N-terminus.</text>
</comment>
<comment type="sequence caution" evidence="6">
    <conflict type="erroneous initiation">
        <sequence resource="EMBL-CDS" id="AAI25134"/>
    </conflict>
    <text>Truncated N-terminus.</text>
</comment>
<comment type="sequence caution" evidence="6">
    <conflict type="erroneous initiation">
        <sequence resource="EMBL-CDS" id="AAL99915"/>
    </conflict>
    <text>Extended N-terminus.</text>
</comment>
<comment type="sequence caution" evidence="6">
    <conflict type="erroneous initiation">
        <sequence resource="EMBL-CDS" id="BAB15039"/>
    </conflict>
    <text>Truncated N-terminus.</text>
</comment>
<comment type="sequence caution" evidence="6">
    <conflict type="erroneous initiation">
        <sequence resource="EMBL-CDS" id="BAB71081"/>
    </conflict>
    <text>Truncated N-terminus.</text>
</comment>
<organism>
    <name type="scientific">Homo sapiens</name>
    <name type="common">Human</name>
    <dbReference type="NCBI Taxonomy" id="9606"/>
    <lineage>
        <taxon>Eukaryota</taxon>
        <taxon>Metazoa</taxon>
        <taxon>Chordata</taxon>
        <taxon>Craniata</taxon>
        <taxon>Vertebrata</taxon>
        <taxon>Euteleostomi</taxon>
        <taxon>Mammalia</taxon>
        <taxon>Eutheria</taxon>
        <taxon>Euarchontoglires</taxon>
        <taxon>Primates</taxon>
        <taxon>Haplorrhini</taxon>
        <taxon>Catarrhini</taxon>
        <taxon>Hominidae</taxon>
        <taxon>Homo</taxon>
    </lineage>
</organism>
<reference key="1">
    <citation type="journal article" date="2005" name="Nature">
        <title>Generation and annotation of the DNA sequences of human chromosomes 2 and 4.</title>
        <authorList>
            <person name="Hillier L.W."/>
            <person name="Graves T.A."/>
            <person name="Fulton R.S."/>
            <person name="Fulton L.A."/>
            <person name="Pepin K.H."/>
            <person name="Minx P."/>
            <person name="Wagner-McPherson C."/>
            <person name="Layman D."/>
            <person name="Wylie K."/>
            <person name="Sekhon M."/>
            <person name="Becker M.C."/>
            <person name="Fewell G.A."/>
            <person name="Delehaunty K.D."/>
            <person name="Miner T.L."/>
            <person name="Nash W.E."/>
            <person name="Kremitzki C."/>
            <person name="Oddy L."/>
            <person name="Du H."/>
            <person name="Sun H."/>
            <person name="Bradshaw-Cordum H."/>
            <person name="Ali J."/>
            <person name="Carter J."/>
            <person name="Cordes M."/>
            <person name="Harris A."/>
            <person name="Isak A."/>
            <person name="van Brunt A."/>
            <person name="Nguyen C."/>
            <person name="Du F."/>
            <person name="Courtney L."/>
            <person name="Kalicki J."/>
            <person name="Ozersky P."/>
            <person name="Abbott S."/>
            <person name="Armstrong J."/>
            <person name="Belter E.A."/>
            <person name="Caruso L."/>
            <person name="Cedroni M."/>
            <person name="Cotton M."/>
            <person name="Davidson T."/>
            <person name="Desai A."/>
            <person name="Elliott G."/>
            <person name="Erb T."/>
            <person name="Fronick C."/>
            <person name="Gaige T."/>
            <person name="Haakenson W."/>
            <person name="Haglund K."/>
            <person name="Holmes A."/>
            <person name="Harkins R."/>
            <person name="Kim K."/>
            <person name="Kruchowski S.S."/>
            <person name="Strong C.M."/>
            <person name="Grewal N."/>
            <person name="Goyea E."/>
            <person name="Hou S."/>
            <person name="Levy A."/>
            <person name="Martinka S."/>
            <person name="Mead K."/>
            <person name="McLellan M.D."/>
            <person name="Meyer R."/>
            <person name="Randall-Maher J."/>
            <person name="Tomlinson C."/>
            <person name="Dauphin-Kohlberg S."/>
            <person name="Kozlowicz-Reilly A."/>
            <person name="Shah N."/>
            <person name="Swearengen-Shahid S."/>
            <person name="Snider J."/>
            <person name="Strong J.T."/>
            <person name="Thompson J."/>
            <person name="Yoakum M."/>
            <person name="Leonard S."/>
            <person name="Pearman C."/>
            <person name="Trani L."/>
            <person name="Radionenko M."/>
            <person name="Waligorski J.E."/>
            <person name="Wang C."/>
            <person name="Rock S.M."/>
            <person name="Tin-Wollam A.-M."/>
            <person name="Maupin R."/>
            <person name="Latreille P."/>
            <person name="Wendl M.C."/>
            <person name="Yang S.-P."/>
            <person name="Pohl C."/>
            <person name="Wallis J.W."/>
            <person name="Spieth J."/>
            <person name="Bieri T.A."/>
            <person name="Berkowicz N."/>
            <person name="Nelson J.O."/>
            <person name="Osborne J."/>
            <person name="Ding L."/>
            <person name="Meyer R."/>
            <person name="Sabo A."/>
            <person name="Shotland Y."/>
            <person name="Sinha P."/>
            <person name="Wohldmann P.E."/>
            <person name="Cook L.L."/>
            <person name="Hickenbotham M.T."/>
            <person name="Eldred J."/>
            <person name="Williams D."/>
            <person name="Jones T.A."/>
            <person name="She X."/>
            <person name="Ciccarelli F.D."/>
            <person name="Izaurralde E."/>
            <person name="Taylor J."/>
            <person name="Schmutz J."/>
            <person name="Myers R.M."/>
            <person name="Cox D.R."/>
            <person name="Huang X."/>
            <person name="McPherson J.D."/>
            <person name="Mardis E.R."/>
            <person name="Clifton S.W."/>
            <person name="Warren W.C."/>
            <person name="Chinwalla A.T."/>
            <person name="Eddy S.R."/>
            <person name="Marra M.A."/>
            <person name="Ovcharenko I."/>
            <person name="Furey T.S."/>
            <person name="Miller W."/>
            <person name="Eichler E.E."/>
            <person name="Bork P."/>
            <person name="Suyama M."/>
            <person name="Torrents D."/>
            <person name="Waterston R.H."/>
            <person name="Wilson R.K."/>
        </authorList>
    </citation>
    <scope>NUCLEOTIDE SEQUENCE [LARGE SCALE GENOMIC DNA]</scope>
</reference>
<reference key="2">
    <citation type="journal article" date="2004" name="Genome Res.">
        <title>The status, quality, and expansion of the NIH full-length cDNA project: the Mammalian Gene Collection (MGC).</title>
        <authorList>
            <consortium name="The MGC Project Team"/>
        </authorList>
    </citation>
    <scope>NUCLEOTIDE SEQUENCE [LARGE SCALE MRNA] (ISOFORM 4)</scope>
    <scope>NUCLEOTIDE SEQUENCE [LARGE SCALE MRNA] OF 435-884 AND 1204-1353 (ISOFORM 1)</scope>
    <source>
        <tissue>Brain</tissue>
        <tissue>Prostate</tissue>
        <tissue>Uterus</tissue>
    </source>
</reference>
<reference key="3">
    <citation type="journal article" date="2004" name="Nat. Genet.">
        <title>Complete sequencing and characterization of 21,243 full-length human cDNAs.</title>
        <authorList>
            <person name="Ota T."/>
            <person name="Suzuki Y."/>
            <person name="Nishikawa T."/>
            <person name="Otsuki T."/>
            <person name="Sugiyama T."/>
            <person name="Irie R."/>
            <person name="Wakamatsu A."/>
            <person name="Hayashi K."/>
            <person name="Sato H."/>
            <person name="Nagai K."/>
            <person name="Kimura K."/>
            <person name="Makita H."/>
            <person name="Sekine M."/>
            <person name="Obayashi M."/>
            <person name="Nishi T."/>
            <person name="Shibahara T."/>
            <person name="Tanaka T."/>
            <person name="Ishii S."/>
            <person name="Yamamoto J."/>
            <person name="Saito K."/>
            <person name="Kawai Y."/>
            <person name="Isono Y."/>
            <person name="Nakamura Y."/>
            <person name="Nagahari K."/>
            <person name="Murakami K."/>
            <person name="Yasuda T."/>
            <person name="Iwayanagi T."/>
            <person name="Wagatsuma M."/>
            <person name="Shiratori A."/>
            <person name="Sudo H."/>
            <person name="Hosoiri T."/>
            <person name="Kaku Y."/>
            <person name="Kodaira H."/>
            <person name="Kondo H."/>
            <person name="Sugawara M."/>
            <person name="Takahashi M."/>
            <person name="Kanda K."/>
            <person name="Yokoi T."/>
            <person name="Furuya T."/>
            <person name="Kikkawa E."/>
            <person name="Omura Y."/>
            <person name="Abe K."/>
            <person name="Kamihara K."/>
            <person name="Katsuta N."/>
            <person name="Sato K."/>
            <person name="Tanikawa M."/>
            <person name="Yamazaki M."/>
            <person name="Ninomiya K."/>
            <person name="Ishibashi T."/>
            <person name="Yamashita H."/>
            <person name="Murakawa K."/>
            <person name="Fujimori K."/>
            <person name="Tanai H."/>
            <person name="Kimata M."/>
            <person name="Watanabe M."/>
            <person name="Hiraoka S."/>
            <person name="Chiba Y."/>
            <person name="Ishida S."/>
            <person name="Ono Y."/>
            <person name="Takiguchi S."/>
            <person name="Watanabe S."/>
            <person name="Yosida M."/>
            <person name="Hotuta T."/>
            <person name="Kusano J."/>
            <person name="Kanehori K."/>
            <person name="Takahashi-Fujii A."/>
            <person name="Hara H."/>
            <person name="Tanase T.-O."/>
            <person name="Nomura Y."/>
            <person name="Togiya S."/>
            <person name="Komai F."/>
            <person name="Hara R."/>
            <person name="Takeuchi K."/>
            <person name="Arita M."/>
            <person name="Imose N."/>
            <person name="Musashino K."/>
            <person name="Yuuki H."/>
            <person name="Oshima A."/>
            <person name="Sasaki N."/>
            <person name="Aotsuka S."/>
            <person name="Yoshikawa Y."/>
            <person name="Matsunawa H."/>
            <person name="Ichihara T."/>
            <person name="Shiohata N."/>
            <person name="Sano S."/>
            <person name="Moriya S."/>
            <person name="Momiyama H."/>
            <person name="Satoh N."/>
            <person name="Takami S."/>
            <person name="Terashima Y."/>
            <person name="Suzuki O."/>
            <person name="Nakagawa S."/>
            <person name="Senoh A."/>
            <person name="Mizoguchi H."/>
            <person name="Goto Y."/>
            <person name="Shimizu F."/>
            <person name="Wakebe H."/>
            <person name="Hishigaki H."/>
            <person name="Watanabe T."/>
            <person name="Sugiyama A."/>
            <person name="Takemoto M."/>
            <person name="Kawakami B."/>
            <person name="Yamazaki M."/>
            <person name="Watanabe K."/>
            <person name="Kumagai A."/>
            <person name="Itakura S."/>
            <person name="Fukuzumi Y."/>
            <person name="Fujimori Y."/>
            <person name="Komiyama M."/>
            <person name="Tashiro H."/>
            <person name="Tanigami A."/>
            <person name="Fujiwara T."/>
            <person name="Ono T."/>
            <person name="Yamada K."/>
            <person name="Fujii Y."/>
            <person name="Ozaki K."/>
            <person name="Hirao M."/>
            <person name="Ohmori Y."/>
            <person name="Kawabata A."/>
            <person name="Hikiji T."/>
            <person name="Kobatake N."/>
            <person name="Inagaki H."/>
            <person name="Ikema Y."/>
            <person name="Okamoto S."/>
            <person name="Okitani R."/>
            <person name="Kawakami T."/>
            <person name="Noguchi S."/>
            <person name="Itoh T."/>
            <person name="Shigeta K."/>
            <person name="Senba T."/>
            <person name="Matsumura K."/>
            <person name="Nakajima Y."/>
            <person name="Mizuno T."/>
            <person name="Morinaga M."/>
            <person name="Sasaki M."/>
            <person name="Togashi T."/>
            <person name="Oyama M."/>
            <person name="Hata H."/>
            <person name="Watanabe M."/>
            <person name="Komatsu T."/>
            <person name="Mizushima-Sugano J."/>
            <person name="Satoh T."/>
            <person name="Shirai Y."/>
            <person name="Takahashi Y."/>
            <person name="Nakagawa K."/>
            <person name="Okumura K."/>
            <person name="Nagase T."/>
            <person name="Nomura N."/>
            <person name="Kikuchi H."/>
            <person name="Masuho Y."/>
            <person name="Yamashita R."/>
            <person name="Nakai K."/>
            <person name="Yada T."/>
            <person name="Nakamura Y."/>
            <person name="Ohara O."/>
            <person name="Isogai T."/>
            <person name="Sugano S."/>
        </authorList>
    </citation>
    <scope>NUCLEOTIDE SEQUENCE [LARGE SCALE MRNA] (ISOFORM 4)</scope>
    <scope>NUCLEOTIDE SEQUENCE [LARGE SCALE MRNA] OF 1165-1353 (ISOFORM 3)</scope>
    <scope>NUCLEOTIDE SEQUENCE [LARGE SCALE MRNA] OF 1204-1353 (ISOFORM 1)</scope>
    <source>
        <tissue>Embryo</tissue>
    </source>
</reference>
<reference key="4">
    <citation type="submission" date="2001-10" db="EMBL/GenBank/DDBJ databases">
        <title>Identification of novel tumor antigens in CLL by SEREX: assessment of their potential as targets for immunotherapeutic approaches.</title>
        <authorList>
            <person name="Krackhardt A.M."/>
            <person name="Witzens M."/>
            <person name="Harig S."/>
            <person name="Hodi F.S."/>
            <person name="Zauls A.J."/>
            <person name="Chessia M."/>
            <person name="Barrett P."/>
            <person name="Gribben J.G."/>
        </authorList>
    </citation>
    <scope>NUCLEOTIDE SEQUENCE [MRNA] OF 1120-1353 (ISOFORM 2)</scope>
</reference>